<sequence>MTNIRKTHPLLKIINDSLVDLPVPSSVSSWWNFGSLLAACLAVQILTGLFLAMHYTSDTATAFNSVTHICRDVNYGWILRYLHANGASMFFICLYIHVGRGLYYGSYMYSETWNIGIILLFAVMATAFMGYVLPWGQMSFWGATVITNLLSAIPYIGTDLVQWIWGGFSVDKATLTRFFAFHFLLPFIIAALVVVHLLFLHETGSSNPTGIPSDPDMVPFHPYHTIKDILGILTMLTVLSMLVLFSPDLLGDPDNYIPANPLNTPPHIKPEWYFLFAYAILRSIPNKLGGVLALVLSILILAIIPMLHTSKQRTMMFRPLSQCLFWLLAADLLTLTWIGGQPVEHPYIIIGQAASVLYFTIILLLMPLVSTMENHLLKW</sequence>
<geneLocation type="mitochondrion"/>
<comment type="function">
    <text evidence="2">Component of the ubiquinol-cytochrome c reductase complex (complex III or cytochrome b-c1 complex) that is part of the mitochondrial respiratory chain. The b-c1 complex mediates electron transfer from ubiquinol to cytochrome c. Contributes to the generation of a proton gradient across the mitochondrial membrane that is then used for ATP synthesis.</text>
</comment>
<comment type="cofactor">
    <cofactor evidence="2">
        <name>heme b</name>
        <dbReference type="ChEBI" id="CHEBI:60344"/>
    </cofactor>
    <text evidence="2">Binds 2 heme b groups non-covalently.</text>
</comment>
<comment type="subunit">
    <text evidence="2">The cytochrome bc1 complex contains 11 subunits: 3 respiratory subunits (MT-CYB, CYC1 and UQCRFS1), 2 core proteins (UQCRC1 and UQCRC2) and 6 low-molecular weight proteins (UQCRH/QCR6, UQCRB/QCR7, UQCRQ/QCR8, UQCR10/QCR9, UQCR11/QCR10 and a cleavage product of UQCRFS1). This cytochrome bc1 complex then forms a dimer.</text>
</comment>
<comment type="subcellular location">
    <subcellularLocation>
        <location evidence="2">Mitochondrion inner membrane</location>
        <topology evidence="2">Multi-pass membrane protein</topology>
    </subcellularLocation>
</comment>
<comment type="miscellaneous">
    <text evidence="1">Heme 1 (or BL or b562) is low-potential and absorbs at about 562 nm, and heme 2 (or BH or b566) is high-potential and absorbs at about 566 nm.</text>
</comment>
<comment type="similarity">
    <text evidence="3 4">Belongs to the cytochrome b family.</text>
</comment>
<comment type="caution">
    <text evidence="2">The full-length protein contains only eight transmembrane helices, not nine as predicted by bioinformatics tools.</text>
</comment>
<reference key="1">
    <citation type="journal article" date="2001" name="Mol. Phylogenet. Evol.">
        <title>Molecular systematics of the family Mormoopidae (Chiroptera) based on cytochrome b and recombination activating gene 2 sequences.</title>
        <authorList>
            <person name="Lewis-Oritt N."/>
            <person name="Porter C.A."/>
            <person name="Baker R.J."/>
        </authorList>
    </citation>
    <scope>NUCLEOTIDE SEQUENCE [GENOMIC DNA]</scope>
    <source>
        <strain>Isolate TK 32171</strain>
        <strain>Isolate TK 9487</strain>
    </source>
</reference>
<feature type="chain" id="PRO_0000061465" description="Cytochrome b">
    <location>
        <begin position="1"/>
        <end position="379"/>
    </location>
</feature>
<feature type="transmembrane region" description="Helical" evidence="2">
    <location>
        <begin position="33"/>
        <end position="53"/>
    </location>
</feature>
<feature type="transmembrane region" description="Helical" evidence="2">
    <location>
        <begin position="77"/>
        <end position="98"/>
    </location>
</feature>
<feature type="transmembrane region" description="Helical" evidence="2">
    <location>
        <begin position="113"/>
        <end position="133"/>
    </location>
</feature>
<feature type="transmembrane region" description="Helical" evidence="2">
    <location>
        <begin position="178"/>
        <end position="198"/>
    </location>
</feature>
<feature type="transmembrane region" description="Helical" evidence="2">
    <location>
        <begin position="226"/>
        <end position="246"/>
    </location>
</feature>
<feature type="transmembrane region" description="Helical" evidence="2">
    <location>
        <begin position="288"/>
        <end position="308"/>
    </location>
</feature>
<feature type="transmembrane region" description="Helical" evidence="2">
    <location>
        <begin position="320"/>
        <end position="340"/>
    </location>
</feature>
<feature type="transmembrane region" description="Helical" evidence="2">
    <location>
        <begin position="347"/>
        <end position="367"/>
    </location>
</feature>
<feature type="binding site" description="axial binding residue" evidence="2">
    <location>
        <position position="83"/>
    </location>
    <ligand>
        <name>heme b</name>
        <dbReference type="ChEBI" id="CHEBI:60344"/>
        <label>b562</label>
    </ligand>
    <ligandPart>
        <name>Fe</name>
        <dbReference type="ChEBI" id="CHEBI:18248"/>
    </ligandPart>
</feature>
<feature type="binding site" description="axial binding residue" evidence="2">
    <location>
        <position position="97"/>
    </location>
    <ligand>
        <name>heme b</name>
        <dbReference type="ChEBI" id="CHEBI:60344"/>
        <label>b566</label>
    </ligand>
    <ligandPart>
        <name>Fe</name>
        <dbReference type="ChEBI" id="CHEBI:18248"/>
    </ligandPart>
</feature>
<feature type="binding site" description="axial binding residue" evidence="2">
    <location>
        <position position="182"/>
    </location>
    <ligand>
        <name>heme b</name>
        <dbReference type="ChEBI" id="CHEBI:60344"/>
        <label>b562</label>
    </ligand>
    <ligandPart>
        <name>Fe</name>
        <dbReference type="ChEBI" id="CHEBI:18248"/>
    </ligandPart>
</feature>
<feature type="binding site" description="axial binding residue" evidence="2">
    <location>
        <position position="196"/>
    </location>
    <ligand>
        <name>heme b</name>
        <dbReference type="ChEBI" id="CHEBI:60344"/>
        <label>b566</label>
    </ligand>
    <ligandPart>
        <name>Fe</name>
        <dbReference type="ChEBI" id="CHEBI:18248"/>
    </ligandPart>
</feature>
<feature type="binding site" evidence="2">
    <location>
        <position position="201"/>
    </location>
    <ligand>
        <name>a ubiquinone</name>
        <dbReference type="ChEBI" id="CHEBI:16389"/>
    </ligand>
</feature>
<name>CYB_PTEQU</name>
<dbReference type="EMBL" id="AF338681">
    <property type="protein sequence ID" value="AAK21941.1"/>
    <property type="molecule type" value="Genomic_DNA"/>
</dbReference>
<dbReference type="EMBL" id="AF338682">
    <property type="protein sequence ID" value="AAK21942.1"/>
    <property type="molecule type" value="Genomic_DNA"/>
</dbReference>
<dbReference type="SMR" id="Q9B0Y1"/>
<dbReference type="GO" id="GO:0005743">
    <property type="term" value="C:mitochondrial inner membrane"/>
    <property type="evidence" value="ECO:0007669"/>
    <property type="project" value="UniProtKB-SubCell"/>
</dbReference>
<dbReference type="GO" id="GO:0045275">
    <property type="term" value="C:respiratory chain complex III"/>
    <property type="evidence" value="ECO:0007669"/>
    <property type="project" value="InterPro"/>
</dbReference>
<dbReference type="GO" id="GO:0046872">
    <property type="term" value="F:metal ion binding"/>
    <property type="evidence" value="ECO:0007669"/>
    <property type="project" value="UniProtKB-KW"/>
</dbReference>
<dbReference type="GO" id="GO:0008121">
    <property type="term" value="F:ubiquinol-cytochrome-c reductase activity"/>
    <property type="evidence" value="ECO:0007669"/>
    <property type="project" value="InterPro"/>
</dbReference>
<dbReference type="GO" id="GO:0006122">
    <property type="term" value="P:mitochondrial electron transport, ubiquinol to cytochrome c"/>
    <property type="evidence" value="ECO:0007669"/>
    <property type="project" value="TreeGrafter"/>
</dbReference>
<dbReference type="CDD" id="cd00290">
    <property type="entry name" value="cytochrome_b_C"/>
    <property type="match status" value="1"/>
</dbReference>
<dbReference type="CDD" id="cd00284">
    <property type="entry name" value="Cytochrome_b_N"/>
    <property type="match status" value="1"/>
</dbReference>
<dbReference type="FunFam" id="1.20.810.10:FF:000002">
    <property type="entry name" value="Cytochrome b"/>
    <property type="match status" value="1"/>
</dbReference>
<dbReference type="Gene3D" id="1.20.810.10">
    <property type="entry name" value="Cytochrome Bc1 Complex, Chain C"/>
    <property type="match status" value="1"/>
</dbReference>
<dbReference type="InterPro" id="IPR005798">
    <property type="entry name" value="Cyt_b/b6_C"/>
</dbReference>
<dbReference type="InterPro" id="IPR036150">
    <property type="entry name" value="Cyt_b/b6_C_sf"/>
</dbReference>
<dbReference type="InterPro" id="IPR005797">
    <property type="entry name" value="Cyt_b/b6_N"/>
</dbReference>
<dbReference type="InterPro" id="IPR027387">
    <property type="entry name" value="Cytb/b6-like_sf"/>
</dbReference>
<dbReference type="InterPro" id="IPR030689">
    <property type="entry name" value="Cytochrome_b"/>
</dbReference>
<dbReference type="InterPro" id="IPR048260">
    <property type="entry name" value="Cytochrome_b_C_euk/bac"/>
</dbReference>
<dbReference type="InterPro" id="IPR048259">
    <property type="entry name" value="Cytochrome_b_N_euk/bac"/>
</dbReference>
<dbReference type="InterPro" id="IPR016174">
    <property type="entry name" value="Di-haem_cyt_TM"/>
</dbReference>
<dbReference type="PANTHER" id="PTHR19271">
    <property type="entry name" value="CYTOCHROME B"/>
    <property type="match status" value="1"/>
</dbReference>
<dbReference type="PANTHER" id="PTHR19271:SF16">
    <property type="entry name" value="CYTOCHROME B"/>
    <property type="match status" value="1"/>
</dbReference>
<dbReference type="Pfam" id="PF00032">
    <property type="entry name" value="Cytochrom_B_C"/>
    <property type="match status" value="1"/>
</dbReference>
<dbReference type="Pfam" id="PF00033">
    <property type="entry name" value="Cytochrome_B"/>
    <property type="match status" value="1"/>
</dbReference>
<dbReference type="PIRSF" id="PIRSF038885">
    <property type="entry name" value="COB"/>
    <property type="match status" value="1"/>
</dbReference>
<dbReference type="SUPFAM" id="SSF81648">
    <property type="entry name" value="a domain/subunit of cytochrome bc1 complex (Ubiquinol-cytochrome c reductase)"/>
    <property type="match status" value="1"/>
</dbReference>
<dbReference type="SUPFAM" id="SSF81342">
    <property type="entry name" value="Transmembrane di-heme cytochromes"/>
    <property type="match status" value="1"/>
</dbReference>
<dbReference type="PROSITE" id="PS51003">
    <property type="entry name" value="CYTB_CTER"/>
    <property type="match status" value="1"/>
</dbReference>
<dbReference type="PROSITE" id="PS51002">
    <property type="entry name" value="CYTB_NTER"/>
    <property type="match status" value="1"/>
</dbReference>
<evidence type="ECO:0000250" key="1"/>
<evidence type="ECO:0000250" key="2">
    <source>
        <dbReference type="UniProtKB" id="P00157"/>
    </source>
</evidence>
<evidence type="ECO:0000255" key="3">
    <source>
        <dbReference type="PROSITE-ProRule" id="PRU00967"/>
    </source>
</evidence>
<evidence type="ECO:0000255" key="4">
    <source>
        <dbReference type="PROSITE-ProRule" id="PRU00968"/>
    </source>
</evidence>
<protein>
    <recommendedName>
        <fullName>Cytochrome b</fullName>
    </recommendedName>
    <alternativeName>
        <fullName>Complex III subunit 3</fullName>
    </alternativeName>
    <alternativeName>
        <fullName>Complex III subunit III</fullName>
    </alternativeName>
    <alternativeName>
        <fullName>Cytochrome b-c1 complex subunit 3</fullName>
    </alternativeName>
    <alternativeName>
        <fullName>Ubiquinol-cytochrome-c reductase complex cytochrome b subunit</fullName>
    </alternativeName>
</protein>
<keyword id="KW-0249">Electron transport</keyword>
<keyword id="KW-0349">Heme</keyword>
<keyword id="KW-0408">Iron</keyword>
<keyword id="KW-0472">Membrane</keyword>
<keyword id="KW-0479">Metal-binding</keyword>
<keyword id="KW-0496">Mitochondrion</keyword>
<keyword id="KW-0999">Mitochondrion inner membrane</keyword>
<keyword id="KW-0679">Respiratory chain</keyword>
<keyword id="KW-0812">Transmembrane</keyword>
<keyword id="KW-1133">Transmembrane helix</keyword>
<keyword id="KW-0813">Transport</keyword>
<keyword id="KW-0830">Ubiquinone</keyword>
<proteinExistence type="inferred from homology"/>
<accession>Q9B0Y1</accession>
<organism>
    <name type="scientific">Pteronotus quadridens</name>
    <name type="common">Sooty mustached bat</name>
    <dbReference type="NCBI Taxonomy" id="118854"/>
    <lineage>
        <taxon>Eukaryota</taxon>
        <taxon>Metazoa</taxon>
        <taxon>Chordata</taxon>
        <taxon>Craniata</taxon>
        <taxon>Vertebrata</taxon>
        <taxon>Euteleostomi</taxon>
        <taxon>Mammalia</taxon>
        <taxon>Eutheria</taxon>
        <taxon>Laurasiatheria</taxon>
        <taxon>Chiroptera</taxon>
        <taxon>Yangochiroptera</taxon>
        <taxon>Mormoopidae</taxon>
        <taxon>Pteronotus</taxon>
    </lineage>
</organism>
<gene>
    <name type="primary">MT-CYB</name>
    <name type="synonym">COB</name>
    <name type="synonym">CYTB</name>
    <name type="synonym">MTCYB</name>
</gene>